<dbReference type="EMBL" id="CP001010">
    <property type="protein sequence ID" value="ACB43377.1"/>
    <property type="molecule type" value="Genomic_DNA"/>
</dbReference>
<dbReference type="SMR" id="B1XSQ0"/>
<dbReference type="STRING" id="452638.Pnec_0049"/>
<dbReference type="KEGG" id="pne:Pnec_0049"/>
<dbReference type="eggNOG" id="COG0051">
    <property type="taxonomic scope" value="Bacteria"/>
</dbReference>
<dbReference type="HOGENOM" id="CLU_122625_1_3_4"/>
<dbReference type="OrthoDB" id="9804464at2"/>
<dbReference type="GO" id="GO:1990904">
    <property type="term" value="C:ribonucleoprotein complex"/>
    <property type="evidence" value="ECO:0007669"/>
    <property type="project" value="UniProtKB-KW"/>
</dbReference>
<dbReference type="GO" id="GO:0005840">
    <property type="term" value="C:ribosome"/>
    <property type="evidence" value="ECO:0007669"/>
    <property type="project" value="UniProtKB-KW"/>
</dbReference>
<dbReference type="GO" id="GO:0003735">
    <property type="term" value="F:structural constituent of ribosome"/>
    <property type="evidence" value="ECO:0007669"/>
    <property type="project" value="InterPro"/>
</dbReference>
<dbReference type="GO" id="GO:0000049">
    <property type="term" value="F:tRNA binding"/>
    <property type="evidence" value="ECO:0007669"/>
    <property type="project" value="UniProtKB-UniRule"/>
</dbReference>
<dbReference type="GO" id="GO:0006412">
    <property type="term" value="P:translation"/>
    <property type="evidence" value="ECO:0007669"/>
    <property type="project" value="UniProtKB-UniRule"/>
</dbReference>
<dbReference type="FunFam" id="3.30.70.600:FF:000001">
    <property type="entry name" value="30S ribosomal protein S10"/>
    <property type="match status" value="1"/>
</dbReference>
<dbReference type="Gene3D" id="3.30.70.600">
    <property type="entry name" value="Ribosomal protein S10 domain"/>
    <property type="match status" value="1"/>
</dbReference>
<dbReference type="HAMAP" id="MF_00508">
    <property type="entry name" value="Ribosomal_uS10"/>
    <property type="match status" value="1"/>
</dbReference>
<dbReference type="InterPro" id="IPR001848">
    <property type="entry name" value="Ribosomal_uS10"/>
</dbReference>
<dbReference type="InterPro" id="IPR018268">
    <property type="entry name" value="Ribosomal_uS10_CS"/>
</dbReference>
<dbReference type="InterPro" id="IPR027486">
    <property type="entry name" value="Ribosomal_uS10_dom"/>
</dbReference>
<dbReference type="InterPro" id="IPR036838">
    <property type="entry name" value="Ribosomal_uS10_dom_sf"/>
</dbReference>
<dbReference type="NCBIfam" id="NF001861">
    <property type="entry name" value="PRK00596.1"/>
    <property type="match status" value="1"/>
</dbReference>
<dbReference type="NCBIfam" id="TIGR01049">
    <property type="entry name" value="rpsJ_bact"/>
    <property type="match status" value="1"/>
</dbReference>
<dbReference type="PANTHER" id="PTHR11700">
    <property type="entry name" value="30S RIBOSOMAL PROTEIN S10 FAMILY MEMBER"/>
    <property type="match status" value="1"/>
</dbReference>
<dbReference type="Pfam" id="PF00338">
    <property type="entry name" value="Ribosomal_S10"/>
    <property type="match status" value="1"/>
</dbReference>
<dbReference type="PRINTS" id="PR00971">
    <property type="entry name" value="RIBOSOMALS10"/>
</dbReference>
<dbReference type="SMART" id="SM01403">
    <property type="entry name" value="Ribosomal_S10"/>
    <property type="match status" value="1"/>
</dbReference>
<dbReference type="SUPFAM" id="SSF54999">
    <property type="entry name" value="Ribosomal protein S10"/>
    <property type="match status" value="1"/>
</dbReference>
<dbReference type="PROSITE" id="PS00361">
    <property type="entry name" value="RIBOSOMAL_S10"/>
    <property type="match status" value="1"/>
</dbReference>
<protein>
    <recommendedName>
        <fullName evidence="1">Small ribosomal subunit protein uS10</fullName>
    </recommendedName>
    <alternativeName>
        <fullName evidence="2">30S ribosomal protein S10</fullName>
    </alternativeName>
</protein>
<evidence type="ECO:0000255" key="1">
    <source>
        <dbReference type="HAMAP-Rule" id="MF_00508"/>
    </source>
</evidence>
<evidence type="ECO:0000305" key="2"/>
<comment type="function">
    <text evidence="1">Involved in the binding of tRNA to the ribosomes.</text>
</comment>
<comment type="subunit">
    <text evidence="1">Part of the 30S ribosomal subunit.</text>
</comment>
<comment type="similarity">
    <text evidence="1">Belongs to the universal ribosomal protein uS10 family.</text>
</comment>
<proteinExistence type="inferred from homology"/>
<organism>
    <name type="scientific">Polynucleobacter necessarius subsp. necessarius (strain STIR1)</name>
    <dbReference type="NCBI Taxonomy" id="452638"/>
    <lineage>
        <taxon>Bacteria</taxon>
        <taxon>Pseudomonadati</taxon>
        <taxon>Pseudomonadota</taxon>
        <taxon>Betaproteobacteria</taxon>
        <taxon>Burkholderiales</taxon>
        <taxon>Burkholderiaceae</taxon>
        <taxon>Polynucleobacter</taxon>
    </lineage>
</organism>
<accession>B1XSQ0</accession>
<feature type="chain" id="PRO_1000127163" description="Small ribosomal subunit protein uS10">
    <location>
        <begin position="1"/>
        <end position="103"/>
    </location>
</feature>
<keyword id="KW-0687">Ribonucleoprotein</keyword>
<keyword id="KW-0689">Ribosomal protein</keyword>
<sequence length="103" mass="11714">MQNQKIRIRLKAFDYRLIDQSAAEIVDTAKRTGAVVKGPVPLPTRIERFDILRSPHVNKTSRDQLEIRTHLRLMDIVDPTEKTVDALMKLDLPAGVGVEIKLQ</sequence>
<name>RS10_POLNS</name>
<reference key="1">
    <citation type="journal article" date="2013" name="Proc. Natl. Acad. Sci. U.S.A.">
        <title>Polynucleobacter necessarius, a model for genome reduction in both free-living and symbiotic bacteria.</title>
        <authorList>
            <person name="Boscaro V."/>
            <person name="Felletti M."/>
            <person name="Vannini C."/>
            <person name="Ackerman M.S."/>
            <person name="Chain P.S."/>
            <person name="Malfatti S."/>
            <person name="Vergez L.M."/>
            <person name="Shin M."/>
            <person name="Doak T.G."/>
            <person name="Lynch M."/>
            <person name="Petroni G."/>
        </authorList>
    </citation>
    <scope>NUCLEOTIDE SEQUENCE [LARGE SCALE GENOMIC DNA]</scope>
    <source>
        <strain>STIR1</strain>
    </source>
</reference>
<gene>
    <name evidence="1" type="primary">rpsJ</name>
    <name type="ordered locus">Pnec_0049</name>
</gene>